<feature type="chain" id="PRO_0000301765" description="Vacuolar membrane-associated protein iml1">
    <location>
        <begin position="1"/>
        <end position="1830"/>
    </location>
</feature>
<feature type="domain" description="DEP" evidence="2">
    <location>
        <begin position="1317"/>
        <end position="1392"/>
    </location>
</feature>
<feature type="region of interest" description="Disordered" evidence="3">
    <location>
        <begin position="1"/>
        <end position="47"/>
    </location>
</feature>
<feature type="region of interest" description="Disordered" evidence="3">
    <location>
        <begin position="646"/>
        <end position="689"/>
    </location>
</feature>
<feature type="region of interest" description="Disordered" evidence="3">
    <location>
        <begin position="720"/>
        <end position="810"/>
    </location>
</feature>
<feature type="region of interest" description="Disordered" evidence="3">
    <location>
        <begin position="822"/>
        <end position="960"/>
    </location>
</feature>
<feature type="region of interest" description="Disordered" evidence="3">
    <location>
        <begin position="1407"/>
        <end position="1456"/>
    </location>
</feature>
<feature type="region of interest" description="Disordered" evidence="3">
    <location>
        <begin position="1774"/>
        <end position="1830"/>
    </location>
</feature>
<feature type="compositionally biased region" description="Basic residues" evidence="3">
    <location>
        <begin position="1"/>
        <end position="12"/>
    </location>
</feature>
<feature type="compositionally biased region" description="Polar residues" evidence="3">
    <location>
        <begin position="16"/>
        <end position="29"/>
    </location>
</feature>
<feature type="compositionally biased region" description="Basic and acidic residues" evidence="3">
    <location>
        <begin position="30"/>
        <end position="47"/>
    </location>
</feature>
<feature type="compositionally biased region" description="Low complexity" evidence="3">
    <location>
        <begin position="646"/>
        <end position="665"/>
    </location>
</feature>
<feature type="compositionally biased region" description="Polar residues" evidence="3">
    <location>
        <begin position="668"/>
        <end position="679"/>
    </location>
</feature>
<feature type="compositionally biased region" description="Basic residues" evidence="3">
    <location>
        <begin position="726"/>
        <end position="736"/>
    </location>
</feature>
<feature type="compositionally biased region" description="Low complexity" evidence="3">
    <location>
        <begin position="784"/>
        <end position="805"/>
    </location>
</feature>
<feature type="compositionally biased region" description="Low complexity" evidence="3">
    <location>
        <begin position="849"/>
        <end position="863"/>
    </location>
</feature>
<feature type="compositionally biased region" description="Polar residues" evidence="3">
    <location>
        <begin position="907"/>
        <end position="920"/>
    </location>
</feature>
<feature type="compositionally biased region" description="Low complexity" evidence="3">
    <location>
        <begin position="1440"/>
        <end position="1450"/>
    </location>
</feature>
<feature type="compositionally biased region" description="Low complexity" evidence="3">
    <location>
        <begin position="1815"/>
        <end position="1830"/>
    </location>
</feature>
<dbReference type="EMBL" id="CH476602">
    <property type="protein sequence ID" value="EAU33273.1"/>
    <property type="molecule type" value="Genomic_DNA"/>
</dbReference>
<dbReference type="RefSeq" id="XP_001215907.1">
    <property type="nucleotide sequence ID" value="XM_001215907.1"/>
</dbReference>
<dbReference type="SMR" id="Q0CHV5"/>
<dbReference type="STRING" id="341663.Q0CHV5"/>
<dbReference type="EnsemblFungi" id="EAU33273">
    <property type="protein sequence ID" value="EAU33273"/>
    <property type="gene ID" value="ATEG_06729"/>
</dbReference>
<dbReference type="GeneID" id="4322307"/>
<dbReference type="VEuPathDB" id="FungiDB:ATEG_06729"/>
<dbReference type="eggNOG" id="KOG3572">
    <property type="taxonomic scope" value="Eukaryota"/>
</dbReference>
<dbReference type="HOGENOM" id="CLU_000935_1_1_1"/>
<dbReference type="OMA" id="SWMNATP"/>
<dbReference type="OrthoDB" id="39497at2759"/>
<dbReference type="Proteomes" id="UP000007963">
    <property type="component" value="Unassembled WGS sequence"/>
</dbReference>
<dbReference type="GO" id="GO:1990130">
    <property type="term" value="C:GATOR1 complex"/>
    <property type="evidence" value="ECO:0007669"/>
    <property type="project" value="TreeGrafter"/>
</dbReference>
<dbReference type="GO" id="GO:0005774">
    <property type="term" value="C:vacuolar membrane"/>
    <property type="evidence" value="ECO:0007669"/>
    <property type="project" value="UniProtKB-SubCell"/>
</dbReference>
<dbReference type="GO" id="GO:0005096">
    <property type="term" value="F:GTPase activator activity"/>
    <property type="evidence" value="ECO:0007669"/>
    <property type="project" value="InterPro"/>
</dbReference>
<dbReference type="GO" id="GO:0035556">
    <property type="term" value="P:intracellular signal transduction"/>
    <property type="evidence" value="ECO:0007669"/>
    <property type="project" value="InterPro"/>
</dbReference>
<dbReference type="GO" id="GO:1904262">
    <property type="term" value="P:negative regulation of TORC1 signaling"/>
    <property type="evidence" value="ECO:0007669"/>
    <property type="project" value="TreeGrafter"/>
</dbReference>
<dbReference type="GO" id="GO:0010508">
    <property type="term" value="P:positive regulation of autophagy"/>
    <property type="evidence" value="ECO:0007669"/>
    <property type="project" value="TreeGrafter"/>
</dbReference>
<dbReference type="CDD" id="cd04449">
    <property type="entry name" value="DEP_DEPDC5-like"/>
    <property type="match status" value="1"/>
</dbReference>
<dbReference type="FunFam" id="1.10.10.10:FF:001090">
    <property type="entry name" value="Vacuolar membrane-associated protein iml1"/>
    <property type="match status" value="1"/>
</dbReference>
<dbReference type="Gene3D" id="1.10.10.10">
    <property type="entry name" value="Winged helix-like DNA-binding domain superfamily/Winged helix DNA-binding domain"/>
    <property type="match status" value="1"/>
</dbReference>
<dbReference type="InterPro" id="IPR000591">
    <property type="entry name" value="DEP_dom"/>
</dbReference>
<dbReference type="InterPro" id="IPR045838">
    <property type="entry name" value="DEPDC5_CTD"/>
</dbReference>
<dbReference type="InterPro" id="IPR027244">
    <property type="entry name" value="IML1"/>
</dbReference>
<dbReference type="InterPro" id="IPR048255">
    <property type="entry name" value="IML1_N"/>
</dbReference>
<dbReference type="InterPro" id="IPR036388">
    <property type="entry name" value="WH-like_DNA-bd_sf"/>
</dbReference>
<dbReference type="InterPro" id="IPR036390">
    <property type="entry name" value="WH_DNA-bd_sf"/>
</dbReference>
<dbReference type="PANTHER" id="PTHR13179">
    <property type="entry name" value="DEP DOMAIN CONTAINING PROTEIN 5"/>
    <property type="match status" value="1"/>
</dbReference>
<dbReference type="PANTHER" id="PTHR13179:SF8">
    <property type="entry name" value="GATOR COMPLEX PROTEIN DEPDC5"/>
    <property type="match status" value="1"/>
</dbReference>
<dbReference type="Pfam" id="PF00610">
    <property type="entry name" value="DEP"/>
    <property type="match status" value="1"/>
</dbReference>
<dbReference type="Pfam" id="PF19418">
    <property type="entry name" value="DEPDC5_CTD"/>
    <property type="match status" value="1"/>
</dbReference>
<dbReference type="Pfam" id="PF12257">
    <property type="entry name" value="IML1"/>
    <property type="match status" value="1"/>
</dbReference>
<dbReference type="Pfam" id="PF24438">
    <property type="entry name" value="IML1_N_fung"/>
    <property type="match status" value="1"/>
</dbReference>
<dbReference type="SMART" id="SM00049">
    <property type="entry name" value="DEP"/>
    <property type="match status" value="1"/>
</dbReference>
<dbReference type="SUPFAM" id="SSF46785">
    <property type="entry name" value="Winged helix' DNA-binding domain"/>
    <property type="match status" value="1"/>
</dbReference>
<dbReference type="PROSITE" id="PS50186">
    <property type="entry name" value="DEP"/>
    <property type="match status" value="1"/>
</dbReference>
<name>IML1_ASPTN</name>
<comment type="subcellular location">
    <subcellularLocation>
        <location evidence="1">Vacuole membrane</location>
        <topology evidence="1">Peripheral membrane protein</topology>
    </subcellularLocation>
</comment>
<comment type="similarity">
    <text evidence="4">Belongs to the IML1 family.</text>
</comment>
<gene>
    <name type="primary">iml1</name>
    <name type="ORF">ATEG_06729</name>
</gene>
<organism>
    <name type="scientific">Aspergillus terreus (strain NIH 2624 / FGSC A1156)</name>
    <dbReference type="NCBI Taxonomy" id="341663"/>
    <lineage>
        <taxon>Eukaryota</taxon>
        <taxon>Fungi</taxon>
        <taxon>Dikarya</taxon>
        <taxon>Ascomycota</taxon>
        <taxon>Pezizomycotina</taxon>
        <taxon>Eurotiomycetes</taxon>
        <taxon>Eurotiomycetidae</taxon>
        <taxon>Eurotiales</taxon>
        <taxon>Aspergillaceae</taxon>
        <taxon>Aspergillus</taxon>
        <taxon>Aspergillus subgen. Circumdati</taxon>
    </lineage>
</organism>
<reference key="1">
    <citation type="submission" date="2005-09" db="EMBL/GenBank/DDBJ databases">
        <title>Annotation of the Aspergillus terreus NIH2624 genome.</title>
        <authorList>
            <person name="Birren B.W."/>
            <person name="Lander E.S."/>
            <person name="Galagan J.E."/>
            <person name="Nusbaum C."/>
            <person name="Devon K."/>
            <person name="Henn M."/>
            <person name="Ma L.-J."/>
            <person name="Jaffe D.B."/>
            <person name="Butler J."/>
            <person name="Alvarez P."/>
            <person name="Gnerre S."/>
            <person name="Grabherr M."/>
            <person name="Kleber M."/>
            <person name="Mauceli E.W."/>
            <person name="Brockman W."/>
            <person name="Rounsley S."/>
            <person name="Young S.K."/>
            <person name="LaButti K."/>
            <person name="Pushparaj V."/>
            <person name="DeCaprio D."/>
            <person name="Crawford M."/>
            <person name="Koehrsen M."/>
            <person name="Engels R."/>
            <person name="Montgomery P."/>
            <person name="Pearson M."/>
            <person name="Howarth C."/>
            <person name="Larson L."/>
            <person name="Luoma S."/>
            <person name="White J."/>
            <person name="Alvarado L."/>
            <person name="Kodira C.D."/>
            <person name="Zeng Q."/>
            <person name="Oleary S."/>
            <person name="Yandava C."/>
            <person name="Denning D.W."/>
            <person name="Nierman W.C."/>
            <person name="Milne T."/>
            <person name="Madden K."/>
        </authorList>
    </citation>
    <scope>NUCLEOTIDE SEQUENCE [LARGE SCALE GENOMIC DNA]</scope>
    <source>
        <strain>NIH 2624 / FGSC A1156</strain>
    </source>
</reference>
<sequence length="1830" mass="205290">MSLRGPMKRSHLRQVSAASLDSLSTSRSLEASHHDAPSDHPSTPDERAIRLSFPGLERRQCTLWVHDETFSREEILFNQTAFSDTGVSAGDVVEILHARHTADGAHSLKADLGSKSLRDSHAKSSSTLHLDALSKFKTPLQSRCLFVVKPLPQDIKTRHPKLELSVTTSIANIFGFKNRDTVYVSIVDRAQCSASHVDIAFRDQYVVRSDMWRLVMSELADKIVYKGQKIVFMGSIKATVKNIFIRGEKVLSGYFSPQTIPVFRSESAKYVLFIQMSREMWDFDSEGTGDILFSRVINGFLPELFKRWANSDARHLVTIVLFTRVEYDASTIGMSSTLSPESLKNIFNSNHAPTRDFYRVVVNDMASGHWTTILDELKKDFRTFLRDVSTLKVDDAPVAKANGSASAPNARPAVIAGRPSTALRGNILEAIHLASSHLAYDHIDRDMVHTGTSIIVITPGSGVFEVSYESLASTTEALTNRGIAIDLVCLSPMPLHSVPLFKYREPPRRPSTSSFGDIQHGGYSPEMRHSFASLANRTPHLSPKSAIQDSFPGIGLRDSWSTRPQEWNYGIPHWLDISYWNPDTYREARRILKNDPNAPIPFTVTKRSKIFVPRVRMYEIQMMGVMESEQSNISIPYLLEGQSLSRGPSPGLSLSPASLAAPGKPSSRRSSNFRHQLSDSLRPEPFLQNMENPKDVILAKSKKTPNSVLSWMDKYDEKVFQPFPKQRQRRRSPKQKRPSEPNVQVSGAHDRISARSISHLRQHETSGPRPAVRKVEPSFPTPKSPSSAKSASPKKPALKTKSTTKVPRISRTISFALRGLSSTPPRAVASTEVNVEHATGKSSTDTFPDSKSVDSLSVSDSASTRTVIEVSKPPGTPQKPVQSSAITPSRPISIRPAPKLPEEPEQPNRSLAASFSTTATEIPLTEDTRSAAQLRKRGPKFEVTMDPGSRDGQIKSPQSKALAPWVRSINPCNTPREVLRDTTWFGRWQHAYPRPPHVAVVKWKSLKSPAILPLTTEEFPTATELATEYLQTPYRVFPNDDTEGVEAPKTRGVLLREMISLRLSHGFQIVVGKNVVEVSGQYSLQSPNVFDTKGLERDGATVFLSKGKSIHRLICVEGAEIEVTRFTHRSSSVLSPERTNGCTVYTAAMRTILNPVYEIKEIKLDSTTEEYNWNYADNYVAGHRDYLYNPAQQLQFWRVRYVLIPMHLRRNIQSFNEDNEEEIHLLGIDHLTHIWQRHKYVPPEEKRFDTSNKKREQNPLNIMYQTRNPSEVVAAELDRILLTDPGLDSSPAQLLPESELLERSSISLSSLAQIIQGDNGVRMMDRRWHWRLHYNCFIGFELTTWLLQNFRDIDTREEAVEFGDQLMKHGLFQHVEKRHNFRDGNYFYQISSEYRVARPESRNSWFPQIRTEKSTPSTPAGDHSKESPVVGHARSDSVDDTPVQTPTTPSKSKNKATIMLSKSMKYDVDPRKRSNRPEVVDLHYDRLHNPDNCFHLELSWMNTTAKLIEDTVLSWASTAEKFGLKLVQVPIAEACAIDQTQPFRKPYRVQLKVPPPKAPAPTFFNPVSFAQQGAPDQHYFQKALLRKFDFVLDFEARSAFPADVEVSYSWGIPDYRYSQYIHRSGSLLAQITDEGDILLLANRLVSTRSAASRDIPRHERMDRPDQYRARAATYDPGDRMSPRLSPVARPVHDMASPLSPQGHPPLDSANLYRAPEHILSGIVEFCSDAEKLEQFYDESLARPASTKVGPAPATLMDSSIPSLELPASVVSHHISPPPILPSRGPQGSTTVPSVDLRSQVRDDSALPRGSPRAGPRASPLSSGLRPLRLG</sequence>
<protein>
    <recommendedName>
        <fullName>Vacuolar membrane-associated protein iml1</fullName>
    </recommendedName>
</protein>
<accession>Q0CHV5</accession>
<evidence type="ECO:0000250" key="1"/>
<evidence type="ECO:0000255" key="2">
    <source>
        <dbReference type="PROSITE-ProRule" id="PRU00066"/>
    </source>
</evidence>
<evidence type="ECO:0000256" key="3">
    <source>
        <dbReference type="SAM" id="MobiDB-lite"/>
    </source>
</evidence>
<evidence type="ECO:0000305" key="4"/>
<keyword id="KW-0472">Membrane</keyword>
<keyword id="KW-1185">Reference proteome</keyword>
<keyword id="KW-0926">Vacuole</keyword>
<proteinExistence type="inferred from homology"/>